<gene>
    <name evidence="1" type="primary">tus</name>
    <name type="ordered locus">E2348C_1695</name>
</gene>
<feature type="chain" id="PRO_1000135638" description="DNA replication terminus site-binding protein">
    <location>
        <begin position="1"/>
        <end position="309"/>
    </location>
</feature>
<evidence type="ECO:0000255" key="1">
    <source>
        <dbReference type="HAMAP-Rule" id="MF_00483"/>
    </source>
</evidence>
<dbReference type="EMBL" id="FM180568">
    <property type="protein sequence ID" value="CAS09243.1"/>
    <property type="molecule type" value="Genomic_DNA"/>
</dbReference>
<dbReference type="RefSeq" id="WP_001295399.1">
    <property type="nucleotide sequence ID" value="NC_011601.1"/>
</dbReference>
<dbReference type="SMR" id="B7URV0"/>
<dbReference type="GeneID" id="93775758"/>
<dbReference type="KEGG" id="ecg:E2348C_1695"/>
<dbReference type="HOGENOM" id="CLU_078181_0_0_6"/>
<dbReference type="Proteomes" id="UP000008205">
    <property type="component" value="Chromosome"/>
</dbReference>
<dbReference type="GO" id="GO:0005737">
    <property type="term" value="C:cytoplasm"/>
    <property type="evidence" value="ECO:0007669"/>
    <property type="project" value="UniProtKB-SubCell"/>
</dbReference>
<dbReference type="GO" id="GO:0003677">
    <property type="term" value="F:DNA binding"/>
    <property type="evidence" value="ECO:0007669"/>
    <property type="project" value="UniProtKB-UniRule"/>
</dbReference>
<dbReference type="GO" id="GO:0006274">
    <property type="term" value="P:DNA replication termination"/>
    <property type="evidence" value="ECO:0007669"/>
    <property type="project" value="UniProtKB-UniRule"/>
</dbReference>
<dbReference type="Gene3D" id="3.30.54.10">
    <property type="match status" value="1"/>
</dbReference>
<dbReference type="Gene3D" id="3.50.14.10">
    <property type="entry name" value="Replication terminator Tus, domain 1 superfamily/Replication terminator Tus"/>
    <property type="match status" value="1"/>
</dbReference>
<dbReference type="HAMAP" id="MF_00483">
    <property type="entry name" value="Rep_term_Tus"/>
    <property type="match status" value="1"/>
</dbReference>
<dbReference type="InterPro" id="IPR008865">
    <property type="entry name" value="DNA_replication_term_site-bd"/>
</dbReference>
<dbReference type="InterPro" id="IPR036381">
    <property type="entry name" value="Tus_dom1"/>
</dbReference>
<dbReference type="InterPro" id="IPR036384">
    <property type="entry name" value="Tus_sf"/>
</dbReference>
<dbReference type="NCBIfam" id="TIGR02648">
    <property type="entry name" value="rep_term_tus"/>
    <property type="match status" value="1"/>
</dbReference>
<dbReference type="Pfam" id="PF05472">
    <property type="entry name" value="Ter"/>
    <property type="match status" value="1"/>
</dbReference>
<dbReference type="SUPFAM" id="SSF56596">
    <property type="entry name" value="Replication terminator protein (Tus)"/>
    <property type="match status" value="1"/>
</dbReference>
<sequence length="309" mass="35741">MARYDLVDRLNTTFRQMEQELAAFAAHLEQHKLLVARVFSLPEVKKEDEHNPLNRIEVKQHLGNDAQSLALRHFRHLFIQQQSENRSSKAAVRLPGVLCYQVDNLSQAALVSHIQHINKLKTTFEHIVTVESELPTAARFEWVHRHLPGLITLNAYRTLTVLHDPATLRFGWANKHIIKNLHRDEVLAQLEKSLKSPRSVAPWTREEWQRKLEREYQDIAALPQNAKLKIKRPVKVQPIARVWYKGDQKQVQHACPTPLIALINRDNGAGVPDVGELLNYDADNVQHRYKPQAQPLRLIIPRLHLYVAD</sequence>
<proteinExistence type="inferred from homology"/>
<organism>
    <name type="scientific">Escherichia coli O127:H6 (strain E2348/69 / EPEC)</name>
    <dbReference type="NCBI Taxonomy" id="574521"/>
    <lineage>
        <taxon>Bacteria</taxon>
        <taxon>Pseudomonadati</taxon>
        <taxon>Pseudomonadota</taxon>
        <taxon>Gammaproteobacteria</taxon>
        <taxon>Enterobacterales</taxon>
        <taxon>Enterobacteriaceae</taxon>
        <taxon>Escherichia</taxon>
    </lineage>
</organism>
<name>TUS_ECO27</name>
<comment type="function">
    <text evidence="1">Trans-acting protein required for termination of DNA replication. Binds to DNA replication terminator sequences (terA to terF) to prevent the passage of replication forks. The termination efficiency will be affected by the affinity of this protein for the terminator sequence.</text>
</comment>
<comment type="subcellular location">
    <subcellularLocation>
        <location evidence="1">Cytoplasm</location>
    </subcellularLocation>
</comment>
<comment type="similarity">
    <text evidence="1">Belongs to the Tus family.</text>
</comment>
<reference key="1">
    <citation type="journal article" date="2009" name="J. Bacteriol.">
        <title>Complete genome sequence and comparative genome analysis of enteropathogenic Escherichia coli O127:H6 strain E2348/69.</title>
        <authorList>
            <person name="Iguchi A."/>
            <person name="Thomson N.R."/>
            <person name="Ogura Y."/>
            <person name="Saunders D."/>
            <person name="Ooka T."/>
            <person name="Henderson I.R."/>
            <person name="Harris D."/>
            <person name="Asadulghani M."/>
            <person name="Kurokawa K."/>
            <person name="Dean P."/>
            <person name="Kenny B."/>
            <person name="Quail M.A."/>
            <person name="Thurston S."/>
            <person name="Dougan G."/>
            <person name="Hayashi T."/>
            <person name="Parkhill J."/>
            <person name="Frankel G."/>
        </authorList>
    </citation>
    <scope>NUCLEOTIDE SEQUENCE [LARGE SCALE GENOMIC DNA]</scope>
    <source>
        <strain>E2348/69 / EPEC</strain>
    </source>
</reference>
<keyword id="KW-0963">Cytoplasm</keyword>
<keyword id="KW-0235">DNA replication</keyword>
<keyword id="KW-0238">DNA-binding</keyword>
<keyword id="KW-1185">Reference proteome</keyword>
<protein>
    <recommendedName>
        <fullName evidence="1">DNA replication terminus site-binding protein</fullName>
        <shortName evidence="1">Ter-binding protein</shortName>
    </recommendedName>
</protein>
<accession>B7URV0</accession>